<gene>
    <name evidence="1" type="primary">rpsB</name>
    <name type="ordered locus">BALH_3458</name>
</gene>
<name>RS2_BACAH</name>
<keyword id="KW-0687">Ribonucleoprotein</keyword>
<keyword id="KW-0689">Ribosomal protein</keyword>
<evidence type="ECO:0000255" key="1">
    <source>
        <dbReference type="HAMAP-Rule" id="MF_00291"/>
    </source>
</evidence>
<evidence type="ECO:0000305" key="2"/>
<dbReference type="EMBL" id="CP000485">
    <property type="protein sequence ID" value="ABK86693.1"/>
    <property type="molecule type" value="Genomic_DNA"/>
</dbReference>
<dbReference type="RefSeq" id="WP_000111483.1">
    <property type="nucleotide sequence ID" value="NC_008600.1"/>
</dbReference>
<dbReference type="SMR" id="A0RHK0"/>
<dbReference type="GeneID" id="75086962"/>
<dbReference type="KEGG" id="btl:BALH_3458"/>
<dbReference type="HOGENOM" id="CLU_040318_1_2_9"/>
<dbReference type="GO" id="GO:0022627">
    <property type="term" value="C:cytosolic small ribosomal subunit"/>
    <property type="evidence" value="ECO:0007669"/>
    <property type="project" value="TreeGrafter"/>
</dbReference>
<dbReference type="GO" id="GO:0003735">
    <property type="term" value="F:structural constituent of ribosome"/>
    <property type="evidence" value="ECO:0007669"/>
    <property type="project" value="InterPro"/>
</dbReference>
<dbReference type="GO" id="GO:0006412">
    <property type="term" value="P:translation"/>
    <property type="evidence" value="ECO:0007669"/>
    <property type="project" value="UniProtKB-UniRule"/>
</dbReference>
<dbReference type="CDD" id="cd01425">
    <property type="entry name" value="RPS2"/>
    <property type="match status" value="1"/>
</dbReference>
<dbReference type="FunFam" id="1.10.287.610:FF:000001">
    <property type="entry name" value="30S ribosomal protein S2"/>
    <property type="match status" value="1"/>
</dbReference>
<dbReference type="Gene3D" id="3.40.50.10490">
    <property type="entry name" value="Glucose-6-phosphate isomerase like protein, domain 1"/>
    <property type="match status" value="1"/>
</dbReference>
<dbReference type="Gene3D" id="1.10.287.610">
    <property type="entry name" value="Helix hairpin bin"/>
    <property type="match status" value="1"/>
</dbReference>
<dbReference type="HAMAP" id="MF_00291_B">
    <property type="entry name" value="Ribosomal_uS2_B"/>
    <property type="match status" value="1"/>
</dbReference>
<dbReference type="InterPro" id="IPR001865">
    <property type="entry name" value="Ribosomal_uS2"/>
</dbReference>
<dbReference type="InterPro" id="IPR005706">
    <property type="entry name" value="Ribosomal_uS2_bac/mit/plastid"/>
</dbReference>
<dbReference type="InterPro" id="IPR018130">
    <property type="entry name" value="Ribosomal_uS2_CS"/>
</dbReference>
<dbReference type="InterPro" id="IPR023591">
    <property type="entry name" value="Ribosomal_uS2_flav_dom_sf"/>
</dbReference>
<dbReference type="NCBIfam" id="TIGR01011">
    <property type="entry name" value="rpsB_bact"/>
    <property type="match status" value="1"/>
</dbReference>
<dbReference type="PANTHER" id="PTHR12534">
    <property type="entry name" value="30S RIBOSOMAL PROTEIN S2 PROKARYOTIC AND ORGANELLAR"/>
    <property type="match status" value="1"/>
</dbReference>
<dbReference type="PANTHER" id="PTHR12534:SF0">
    <property type="entry name" value="SMALL RIBOSOMAL SUBUNIT PROTEIN US2M"/>
    <property type="match status" value="1"/>
</dbReference>
<dbReference type="Pfam" id="PF00318">
    <property type="entry name" value="Ribosomal_S2"/>
    <property type="match status" value="1"/>
</dbReference>
<dbReference type="PRINTS" id="PR00395">
    <property type="entry name" value="RIBOSOMALS2"/>
</dbReference>
<dbReference type="SUPFAM" id="SSF52313">
    <property type="entry name" value="Ribosomal protein S2"/>
    <property type="match status" value="1"/>
</dbReference>
<dbReference type="PROSITE" id="PS00962">
    <property type="entry name" value="RIBOSOMAL_S2_1"/>
    <property type="match status" value="1"/>
</dbReference>
<dbReference type="PROSITE" id="PS00963">
    <property type="entry name" value="RIBOSOMAL_S2_2"/>
    <property type="match status" value="1"/>
</dbReference>
<reference key="1">
    <citation type="journal article" date="2007" name="J. Bacteriol.">
        <title>The complete genome sequence of Bacillus thuringiensis Al Hakam.</title>
        <authorList>
            <person name="Challacombe J.F."/>
            <person name="Altherr M.R."/>
            <person name="Xie G."/>
            <person name="Bhotika S.S."/>
            <person name="Brown N."/>
            <person name="Bruce D."/>
            <person name="Campbell C.S."/>
            <person name="Campbell M.L."/>
            <person name="Chen J."/>
            <person name="Chertkov O."/>
            <person name="Cleland C."/>
            <person name="Dimitrijevic M."/>
            <person name="Doggett N.A."/>
            <person name="Fawcett J.J."/>
            <person name="Glavina T."/>
            <person name="Goodwin L.A."/>
            <person name="Green L.D."/>
            <person name="Han C.S."/>
            <person name="Hill K.K."/>
            <person name="Hitchcock P."/>
            <person name="Jackson P.J."/>
            <person name="Keim P."/>
            <person name="Kewalramani A.R."/>
            <person name="Longmire J."/>
            <person name="Lucas S."/>
            <person name="Malfatti S."/>
            <person name="Martinez D."/>
            <person name="McMurry K."/>
            <person name="Meincke L.J."/>
            <person name="Misra M."/>
            <person name="Moseman B.L."/>
            <person name="Mundt M."/>
            <person name="Munk A.C."/>
            <person name="Okinaka R.T."/>
            <person name="Parson-Quintana B."/>
            <person name="Reilly L.P."/>
            <person name="Richardson P."/>
            <person name="Robinson D.L."/>
            <person name="Saunders E."/>
            <person name="Tapia R."/>
            <person name="Tesmer J.G."/>
            <person name="Thayer N."/>
            <person name="Thompson L.S."/>
            <person name="Tice H."/>
            <person name="Ticknor L.O."/>
            <person name="Wills P.L."/>
            <person name="Gilna P."/>
            <person name="Brettin T.S."/>
        </authorList>
    </citation>
    <scope>NUCLEOTIDE SEQUENCE [LARGE SCALE GENOMIC DNA]</scope>
    <source>
        <strain>Al Hakam</strain>
    </source>
</reference>
<accession>A0RHK0</accession>
<proteinExistence type="inferred from homology"/>
<comment type="similarity">
    <text evidence="1">Belongs to the universal ribosomal protein uS2 family.</text>
</comment>
<sequence>MSVISMKQLLEAGVHFGHQTRRWNPKMKRYIFTERNGIYIIDLQKTVKKVEEAFKVMRDIAAEGGDILFVGTKKQAQEAIKEEATRAGMYFVNQRWLGGTLTNFQTIQKRIKRLKDIERMQEDGTFEVLPKKEVVQLKKELERLEKFLGGIKDMKGLPSALFVVDPRKERIAVAEARKLHIPIIGIVDTNCDPDEIDHVIPANDDAIRAVKLLTSKMADAILEAKQGEETVTA</sequence>
<feature type="chain" id="PRO_1000003891" description="Small ribosomal subunit protein uS2">
    <location>
        <begin position="1"/>
        <end position="233"/>
    </location>
</feature>
<protein>
    <recommendedName>
        <fullName evidence="1">Small ribosomal subunit protein uS2</fullName>
    </recommendedName>
    <alternativeName>
        <fullName evidence="2">30S ribosomal protein S2</fullName>
    </alternativeName>
</protein>
<organism>
    <name type="scientific">Bacillus thuringiensis (strain Al Hakam)</name>
    <dbReference type="NCBI Taxonomy" id="412694"/>
    <lineage>
        <taxon>Bacteria</taxon>
        <taxon>Bacillati</taxon>
        <taxon>Bacillota</taxon>
        <taxon>Bacilli</taxon>
        <taxon>Bacillales</taxon>
        <taxon>Bacillaceae</taxon>
        <taxon>Bacillus</taxon>
        <taxon>Bacillus cereus group</taxon>
    </lineage>
</organism>